<organism>
    <name type="scientific">Methanosarcina barkeri (strain Fusaro / DSM 804)</name>
    <dbReference type="NCBI Taxonomy" id="269797"/>
    <lineage>
        <taxon>Archaea</taxon>
        <taxon>Methanobacteriati</taxon>
        <taxon>Methanobacteriota</taxon>
        <taxon>Stenosarchaea group</taxon>
        <taxon>Methanomicrobia</taxon>
        <taxon>Methanosarcinales</taxon>
        <taxon>Methanosarcinaceae</taxon>
        <taxon>Methanosarcina</taxon>
    </lineage>
</organism>
<evidence type="ECO:0000255" key="1">
    <source>
        <dbReference type="HAMAP-Rule" id="MF_00260"/>
    </source>
</evidence>
<keyword id="KW-0627">Porphyrin biosynthesis</keyword>
<keyword id="KW-0808">Transferase</keyword>
<feature type="chain" id="PRO_0000304302" description="Probable porphobilinogen deaminase">
    <location>
        <begin position="1"/>
        <end position="316"/>
    </location>
</feature>
<feature type="modified residue" description="S-(dipyrrolylmethanemethyl)cysteine" evidence="1">
    <location>
        <position position="234"/>
    </location>
</feature>
<name>HEM3_METBF</name>
<accession>Q46CH0</accession>
<sequence>MIIGTRGSQLALAQAETVARLLKAKGVETSLKIIKTSGDRFTDRPLHAVSSGVGAFVRELDEVMLEGKIDIAVHSMKDMPTIRPPTLPTVAVLKRDTPFDLLLTYDGTPLDELSEQSIIGTSSLRRAAQIKRYRPDLVTQDLRGNIDTRLRKLKEGKYDGILLAKAGLERMGWELEGEILSPDFFCPSPNQGTIAVVTRAETEAEAAVSRLDHTDSRIATEIERILISELGGGCTTPIGSYAEIMPDRKKLHVRAEVLSLDGEETVGINEFIPMAGGIEKARELGSSLVHMGGKKLADEALMQLSRDSCDSNDLHE</sequence>
<protein>
    <recommendedName>
        <fullName evidence="1">Probable porphobilinogen deaminase</fullName>
        <shortName evidence="1">PBG</shortName>
        <ecNumber evidence="1">2.5.1.61</ecNumber>
    </recommendedName>
    <alternativeName>
        <fullName evidence="1">Hydroxymethylbilane synthase</fullName>
        <shortName evidence="1">HMBS</shortName>
    </alternativeName>
    <alternativeName>
        <fullName evidence="1">Pre-uroporphyrinogen synthase</fullName>
    </alternativeName>
</protein>
<reference key="1">
    <citation type="journal article" date="2006" name="J. Bacteriol.">
        <title>The Methanosarcina barkeri genome: comparative analysis with Methanosarcina acetivorans and Methanosarcina mazei reveals extensive rearrangement within methanosarcinal genomes.</title>
        <authorList>
            <person name="Maeder D.L."/>
            <person name="Anderson I."/>
            <person name="Brettin T.S."/>
            <person name="Bruce D.C."/>
            <person name="Gilna P."/>
            <person name="Han C.S."/>
            <person name="Lapidus A."/>
            <person name="Metcalf W.W."/>
            <person name="Saunders E."/>
            <person name="Tapia R."/>
            <person name="Sowers K.R."/>
        </authorList>
    </citation>
    <scope>NUCLEOTIDE SEQUENCE [LARGE SCALE GENOMIC DNA]</scope>
    <source>
        <strain>Fusaro / DSM 804</strain>
    </source>
</reference>
<dbReference type="EC" id="2.5.1.61" evidence="1"/>
<dbReference type="EMBL" id="CP000099">
    <property type="protein sequence ID" value="AAZ70422.1"/>
    <property type="molecule type" value="Genomic_DNA"/>
</dbReference>
<dbReference type="SMR" id="Q46CH0"/>
<dbReference type="STRING" id="269797.Mbar_A1465"/>
<dbReference type="PaxDb" id="269797-Mbar_A1465"/>
<dbReference type="KEGG" id="mba:Mbar_A1465"/>
<dbReference type="eggNOG" id="arCOG04299">
    <property type="taxonomic scope" value="Archaea"/>
</dbReference>
<dbReference type="HOGENOM" id="CLU_019704_1_0_2"/>
<dbReference type="OrthoDB" id="8042at2157"/>
<dbReference type="UniPathway" id="UPA00251">
    <property type="reaction ID" value="UER00319"/>
</dbReference>
<dbReference type="GO" id="GO:0005737">
    <property type="term" value="C:cytoplasm"/>
    <property type="evidence" value="ECO:0007669"/>
    <property type="project" value="TreeGrafter"/>
</dbReference>
<dbReference type="GO" id="GO:0004418">
    <property type="term" value="F:hydroxymethylbilane synthase activity"/>
    <property type="evidence" value="ECO:0007669"/>
    <property type="project" value="UniProtKB-UniRule"/>
</dbReference>
<dbReference type="GO" id="GO:0006782">
    <property type="term" value="P:protoporphyrinogen IX biosynthetic process"/>
    <property type="evidence" value="ECO:0007669"/>
    <property type="project" value="UniProtKB-UniRule"/>
</dbReference>
<dbReference type="CDD" id="cd13644">
    <property type="entry name" value="PBP2_HemC_archaea"/>
    <property type="match status" value="1"/>
</dbReference>
<dbReference type="FunFam" id="3.40.190.10:FF:000005">
    <property type="entry name" value="Porphobilinogen deaminase"/>
    <property type="match status" value="1"/>
</dbReference>
<dbReference type="Gene3D" id="3.40.190.10">
    <property type="entry name" value="Periplasmic binding protein-like II"/>
    <property type="match status" value="2"/>
</dbReference>
<dbReference type="Gene3D" id="3.30.160.40">
    <property type="entry name" value="Porphobilinogen deaminase, C-terminal domain"/>
    <property type="match status" value="1"/>
</dbReference>
<dbReference type="HAMAP" id="MF_00260">
    <property type="entry name" value="Porphobil_deam"/>
    <property type="match status" value="1"/>
</dbReference>
<dbReference type="InterPro" id="IPR000860">
    <property type="entry name" value="HemC"/>
</dbReference>
<dbReference type="InterPro" id="IPR022419">
    <property type="entry name" value="Porphobilin_deaminase_cofac_BS"/>
</dbReference>
<dbReference type="InterPro" id="IPR022417">
    <property type="entry name" value="Porphobilin_deaminase_N"/>
</dbReference>
<dbReference type="InterPro" id="IPR022418">
    <property type="entry name" value="Porphobilinogen_deaminase_C"/>
</dbReference>
<dbReference type="InterPro" id="IPR036803">
    <property type="entry name" value="Porphobilinogen_deaminase_C_sf"/>
</dbReference>
<dbReference type="NCBIfam" id="TIGR00212">
    <property type="entry name" value="hemC"/>
    <property type="match status" value="1"/>
</dbReference>
<dbReference type="PANTHER" id="PTHR11557">
    <property type="entry name" value="PORPHOBILINOGEN DEAMINASE"/>
    <property type="match status" value="1"/>
</dbReference>
<dbReference type="PANTHER" id="PTHR11557:SF0">
    <property type="entry name" value="PORPHOBILINOGEN DEAMINASE"/>
    <property type="match status" value="1"/>
</dbReference>
<dbReference type="Pfam" id="PF01379">
    <property type="entry name" value="Porphobil_deam"/>
    <property type="match status" value="1"/>
</dbReference>
<dbReference type="Pfam" id="PF03900">
    <property type="entry name" value="Porphobil_deamC"/>
    <property type="match status" value="1"/>
</dbReference>
<dbReference type="PIRSF" id="PIRSF001438">
    <property type="entry name" value="4pyrrol_synth_OHMeBilane_synth"/>
    <property type="match status" value="1"/>
</dbReference>
<dbReference type="PRINTS" id="PR00151">
    <property type="entry name" value="PORPHBDMNASE"/>
</dbReference>
<dbReference type="SUPFAM" id="SSF53850">
    <property type="entry name" value="Periplasmic binding protein-like II"/>
    <property type="match status" value="1"/>
</dbReference>
<dbReference type="SUPFAM" id="SSF54782">
    <property type="entry name" value="Porphobilinogen deaminase (hydroxymethylbilane synthase), C-terminal domain"/>
    <property type="match status" value="1"/>
</dbReference>
<dbReference type="PROSITE" id="PS00533">
    <property type="entry name" value="PORPHOBILINOGEN_DEAM"/>
    <property type="match status" value="1"/>
</dbReference>
<proteinExistence type="inferred from homology"/>
<comment type="function">
    <text evidence="1">Tetrapolymerization of the monopyrrole PBG into the hydroxymethylbilane pre-uroporphyrinogen in several discrete steps.</text>
</comment>
<comment type="catalytic activity">
    <reaction evidence="1">
        <text>4 porphobilinogen + H2O = hydroxymethylbilane + 4 NH4(+)</text>
        <dbReference type="Rhea" id="RHEA:13185"/>
        <dbReference type="ChEBI" id="CHEBI:15377"/>
        <dbReference type="ChEBI" id="CHEBI:28938"/>
        <dbReference type="ChEBI" id="CHEBI:57845"/>
        <dbReference type="ChEBI" id="CHEBI:58126"/>
        <dbReference type="EC" id="2.5.1.61"/>
    </reaction>
</comment>
<comment type="cofactor">
    <cofactor evidence="1">
        <name>dipyrromethane</name>
        <dbReference type="ChEBI" id="CHEBI:60342"/>
    </cofactor>
    <text evidence="1">Binds 1 dipyrromethane group covalently.</text>
</comment>
<comment type="pathway">
    <text evidence="1">Porphyrin-containing compound metabolism; protoporphyrin-IX biosynthesis; coproporphyrinogen-III from 5-aminolevulinate: step 2/4.</text>
</comment>
<comment type="miscellaneous">
    <text evidence="1">The porphobilinogen subunits are added to the dipyrromethane group.</text>
</comment>
<comment type="similarity">
    <text evidence="1">Belongs to the HMBS family.</text>
</comment>
<gene>
    <name evidence="1" type="primary">hemC</name>
    <name type="ordered locus">Mbar_A1465</name>
</gene>